<sequence>MGRFNVKFMIKDIEDEILCLRDNIRKWNKEYYVDSSPSVSDLTYDKALLRLQDLESKYPEYKTLDSPTLKFGSDLLNNFEEVTHSFPILSLDKAYDIKELLLWIEKMVLEGSSLGSYTGISVEPKIDGCSIVLYYKDGILQKALTRGDGRVGNDVTENVRTIKNVPLSIDEKVELVLRGEIYITKENFLKINHTLKNPYLNARNLASGILRRINSREVASFPLDIFVYDILYSSFGLSTNHDAFDKLKKFGFKINPFCKFFGGKNLEEITNHVKKIEMQRNSLEYEIDGVVLKVDSFILRDILGYTSHHPKWSVAYKFESCTGVSKIVDIVVQVGRSGKITPVAHVEKVFVAGAFITNASLHNQDYIDSIGLNVGDVVAISRRGDVIPAVELVVEKLSIGSFKISSNCPSCKMALIKEGSHLFCVNKHCPYRIIEQIKYFCSKKCMNIVGLSGKTIEFLFEMKFISSEIELYTFNFDRLINLRGFDLKRIDNLKRSISDSKGRPFRKLLLGMGIKELGANTILVLINNNLNSFDIISTLCKNKEAALAKLLKIKGIGEKIALNIIEAFNDKIILDKFNFFKELGFKLEEYNTNYVVDDSFLFGKKFCITGSFEGHSRDVLIEKITKKGAIFNRAVTKRLDFLLVGEKPGLKLQKANNLGIKTFGLFDIKDFVDLDN</sequence>
<name>DNLJ_BORT9</name>
<gene>
    <name evidence="1" type="primary">ligA</name>
    <name type="ordered locus">BT0552</name>
</gene>
<reference key="1">
    <citation type="submission" date="2004-12" db="EMBL/GenBank/DDBJ databases">
        <title>The genome sequence of Borrelia hermsii and Borrelia turicatae: comparative analysis of two agents of endemic N. America relapsing fever.</title>
        <authorList>
            <person name="Porcella S.F."/>
            <person name="Raffel S.J."/>
            <person name="Schrumpf M.E."/>
            <person name="Montgomery B."/>
            <person name="Smith T."/>
            <person name="Schwan T.G."/>
        </authorList>
    </citation>
    <scope>NUCLEOTIDE SEQUENCE [LARGE SCALE GENOMIC DNA]</scope>
    <source>
        <strain>91E135</strain>
    </source>
</reference>
<comment type="function">
    <text evidence="1">DNA ligase that catalyzes the formation of phosphodiester linkages between 5'-phosphoryl and 3'-hydroxyl groups in double-stranded DNA using NAD as a coenzyme and as the energy source for the reaction. It is essential for DNA replication and repair of damaged DNA.</text>
</comment>
<comment type="catalytic activity">
    <reaction evidence="1">
        <text>NAD(+) + (deoxyribonucleotide)n-3'-hydroxyl + 5'-phospho-(deoxyribonucleotide)m = (deoxyribonucleotide)n+m + AMP + beta-nicotinamide D-nucleotide.</text>
        <dbReference type="EC" id="6.5.1.2"/>
    </reaction>
</comment>
<comment type="cofactor">
    <cofactor evidence="1">
        <name>Mg(2+)</name>
        <dbReference type="ChEBI" id="CHEBI:18420"/>
    </cofactor>
    <cofactor evidence="1">
        <name>Mn(2+)</name>
        <dbReference type="ChEBI" id="CHEBI:29035"/>
    </cofactor>
</comment>
<comment type="similarity">
    <text evidence="1">Belongs to the NAD-dependent DNA ligase family. LigA subfamily.</text>
</comment>
<feature type="chain" id="PRO_0000380315" description="DNA ligase">
    <location>
        <begin position="1"/>
        <end position="676"/>
    </location>
</feature>
<feature type="active site" description="N6-AMP-lysine intermediate" evidence="1">
    <location>
        <position position="125"/>
    </location>
</feature>
<feature type="binding site" evidence="1">
    <location>
        <begin position="41"/>
        <end position="45"/>
    </location>
    <ligand>
        <name>NAD(+)</name>
        <dbReference type="ChEBI" id="CHEBI:57540"/>
    </ligand>
</feature>
<feature type="binding site" evidence="1">
    <location>
        <begin position="90"/>
        <end position="91"/>
    </location>
    <ligand>
        <name>NAD(+)</name>
        <dbReference type="ChEBI" id="CHEBI:57540"/>
    </ligand>
</feature>
<feature type="binding site" evidence="1">
    <location>
        <position position="123"/>
    </location>
    <ligand>
        <name>NAD(+)</name>
        <dbReference type="ChEBI" id="CHEBI:57540"/>
    </ligand>
</feature>
<feature type="binding site" evidence="1">
    <location>
        <position position="146"/>
    </location>
    <ligand>
        <name>NAD(+)</name>
        <dbReference type="ChEBI" id="CHEBI:57540"/>
    </ligand>
</feature>
<feature type="binding site" evidence="1">
    <location>
        <position position="180"/>
    </location>
    <ligand>
        <name>NAD(+)</name>
        <dbReference type="ChEBI" id="CHEBI:57540"/>
    </ligand>
</feature>
<feature type="binding site" evidence="1">
    <location>
        <position position="293"/>
    </location>
    <ligand>
        <name>NAD(+)</name>
        <dbReference type="ChEBI" id="CHEBI:57540"/>
    </ligand>
</feature>
<feature type="binding site" evidence="1">
    <location>
        <position position="317"/>
    </location>
    <ligand>
        <name>NAD(+)</name>
        <dbReference type="ChEBI" id="CHEBI:57540"/>
    </ligand>
</feature>
<feature type="binding site" evidence="1">
    <location>
        <position position="408"/>
    </location>
    <ligand>
        <name>Zn(2+)</name>
        <dbReference type="ChEBI" id="CHEBI:29105"/>
    </ligand>
</feature>
<feature type="binding site" evidence="1">
    <location>
        <position position="411"/>
    </location>
    <ligand>
        <name>Zn(2+)</name>
        <dbReference type="ChEBI" id="CHEBI:29105"/>
    </ligand>
</feature>
<feature type="binding site" evidence="1">
    <location>
        <position position="424"/>
    </location>
    <ligand>
        <name>Zn(2+)</name>
        <dbReference type="ChEBI" id="CHEBI:29105"/>
    </ligand>
</feature>
<feature type="binding site" evidence="1">
    <location>
        <position position="429"/>
    </location>
    <ligand>
        <name>Zn(2+)</name>
        <dbReference type="ChEBI" id="CHEBI:29105"/>
    </ligand>
</feature>
<keyword id="KW-0227">DNA damage</keyword>
<keyword id="KW-0234">DNA repair</keyword>
<keyword id="KW-0235">DNA replication</keyword>
<keyword id="KW-0436">Ligase</keyword>
<keyword id="KW-0460">Magnesium</keyword>
<keyword id="KW-0464">Manganese</keyword>
<keyword id="KW-0479">Metal-binding</keyword>
<keyword id="KW-0520">NAD</keyword>
<keyword id="KW-1185">Reference proteome</keyword>
<keyword id="KW-0862">Zinc</keyword>
<evidence type="ECO:0000255" key="1">
    <source>
        <dbReference type="HAMAP-Rule" id="MF_01588"/>
    </source>
</evidence>
<accession>A1QZY4</accession>
<dbReference type="EC" id="6.5.1.2" evidence="1"/>
<dbReference type="EMBL" id="CP000049">
    <property type="protein sequence ID" value="AAX17876.1"/>
    <property type="molecule type" value="Genomic_DNA"/>
</dbReference>
<dbReference type="SMR" id="A1QZY4"/>
<dbReference type="KEGG" id="btu:BT0552"/>
<dbReference type="eggNOG" id="COG0272">
    <property type="taxonomic scope" value="Bacteria"/>
</dbReference>
<dbReference type="HOGENOM" id="CLU_007764_2_0_12"/>
<dbReference type="Proteomes" id="UP000001205">
    <property type="component" value="Chromosome"/>
</dbReference>
<dbReference type="GO" id="GO:0003911">
    <property type="term" value="F:DNA ligase (NAD+) activity"/>
    <property type="evidence" value="ECO:0007669"/>
    <property type="project" value="UniProtKB-UniRule"/>
</dbReference>
<dbReference type="GO" id="GO:0046872">
    <property type="term" value="F:metal ion binding"/>
    <property type="evidence" value="ECO:0007669"/>
    <property type="project" value="UniProtKB-KW"/>
</dbReference>
<dbReference type="GO" id="GO:0006281">
    <property type="term" value="P:DNA repair"/>
    <property type="evidence" value="ECO:0007669"/>
    <property type="project" value="UniProtKB-KW"/>
</dbReference>
<dbReference type="GO" id="GO:0006260">
    <property type="term" value="P:DNA replication"/>
    <property type="evidence" value="ECO:0007669"/>
    <property type="project" value="UniProtKB-KW"/>
</dbReference>
<dbReference type="CDD" id="cd17748">
    <property type="entry name" value="BRCT_DNA_ligase_like"/>
    <property type="match status" value="1"/>
</dbReference>
<dbReference type="CDD" id="cd00114">
    <property type="entry name" value="LIGANc"/>
    <property type="match status" value="1"/>
</dbReference>
<dbReference type="Gene3D" id="1.10.150.20">
    <property type="entry name" value="5' to 3' exonuclease, C-terminal subdomain"/>
    <property type="match status" value="2"/>
</dbReference>
<dbReference type="Gene3D" id="3.40.50.10190">
    <property type="entry name" value="BRCT domain"/>
    <property type="match status" value="1"/>
</dbReference>
<dbReference type="Gene3D" id="3.30.470.30">
    <property type="entry name" value="DNA ligase/mRNA capping enzyme"/>
    <property type="match status" value="1"/>
</dbReference>
<dbReference type="Gene3D" id="1.10.287.610">
    <property type="entry name" value="Helix hairpin bin"/>
    <property type="match status" value="1"/>
</dbReference>
<dbReference type="Gene3D" id="2.40.50.140">
    <property type="entry name" value="Nucleic acid-binding proteins"/>
    <property type="match status" value="1"/>
</dbReference>
<dbReference type="HAMAP" id="MF_01588">
    <property type="entry name" value="DNA_ligase_A"/>
    <property type="match status" value="1"/>
</dbReference>
<dbReference type="InterPro" id="IPR001357">
    <property type="entry name" value="BRCT_dom"/>
</dbReference>
<dbReference type="InterPro" id="IPR036420">
    <property type="entry name" value="BRCT_dom_sf"/>
</dbReference>
<dbReference type="InterPro" id="IPR001679">
    <property type="entry name" value="DNA_ligase"/>
</dbReference>
<dbReference type="InterPro" id="IPR013839">
    <property type="entry name" value="DNAligase_adenylation"/>
</dbReference>
<dbReference type="InterPro" id="IPR013840">
    <property type="entry name" value="DNAligase_N"/>
</dbReference>
<dbReference type="InterPro" id="IPR012340">
    <property type="entry name" value="NA-bd_OB-fold"/>
</dbReference>
<dbReference type="InterPro" id="IPR004150">
    <property type="entry name" value="NAD_DNA_ligase_OB"/>
</dbReference>
<dbReference type="InterPro" id="IPR010994">
    <property type="entry name" value="RuvA_2-like"/>
</dbReference>
<dbReference type="NCBIfam" id="TIGR00575">
    <property type="entry name" value="dnlj"/>
    <property type="match status" value="1"/>
</dbReference>
<dbReference type="NCBIfam" id="NF005932">
    <property type="entry name" value="PRK07956.1"/>
    <property type="match status" value="1"/>
</dbReference>
<dbReference type="NCBIfam" id="NF010930">
    <property type="entry name" value="PRK14350.1"/>
    <property type="match status" value="1"/>
</dbReference>
<dbReference type="Pfam" id="PF00533">
    <property type="entry name" value="BRCT"/>
    <property type="match status" value="1"/>
</dbReference>
<dbReference type="Pfam" id="PF01653">
    <property type="entry name" value="DNA_ligase_aden"/>
    <property type="match status" value="1"/>
</dbReference>
<dbReference type="Pfam" id="PF03120">
    <property type="entry name" value="DNA_ligase_OB"/>
    <property type="match status" value="1"/>
</dbReference>
<dbReference type="PIRSF" id="PIRSF001604">
    <property type="entry name" value="LigA"/>
    <property type="match status" value="1"/>
</dbReference>
<dbReference type="SMART" id="SM00292">
    <property type="entry name" value="BRCT"/>
    <property type="match status" value="1"/>
</dbReference>
<dbReference type="SMART" id="SM00532">
    <property type="entry name" value="LIGANc"/>
    <property type="match status" value="1"/>
</dbReference>
<dbReference type="SUPFAM" id="SSF52113">
    <property type="entry name" value="BRCT domain"/>
    <property type="match status" value="1"/>
</dbReference>
<dbReference type="SUPFAM" id="SSF56091">
    <property type="entry name" value="DNA ligase/mRNA capping enzyme, catalytic domain"/>
    <property type="match status" value="1"/>
</dbReference>
<dbReference type="SUPFAM" id="SSF50249">
    <property type="entry name" value="Nucleic acid-binding proteins"/>
    <property type="match status" value="1"/>
</dbReference>
<dbReference type="SUPFAM" id="SSF47781">
    <property type="entry name" value="RuvA domain 2-like"/>
    <property type="match status" value="1"/>
</dbReference>
<proteinExistence type="inferred from homology"/>
<protein>
    <recommendedName>
        <fullName evidence="1">DNA ligase</fullName>
        <ecNumber evidence="1">6.5.1.2</ecNumber>
    </recommendedName>
    <alternativeName>
        <fullName evidence="1">Polydeoxyribonucleotide synthase [NAD(+)]</fullName>
    </alternativeName>
</protein>
<organism>
    <name type="scientific">Borrelia turicatae (strain 91E135)</name>
    <dbReference type="NCBI Taxonomy" id="314724"/>
    <lineage>
        <taxon>Bacteria</taxon>
        <taxon>Pseudomonadati</taxon>
        <taxon>Spirochaetota</taxon>
        <taxon>Spirochaetia</taxon>
        <taxon>Spirochaetales</taxon>
        <taxon>Borreliaceae</taxon>
        <taxon>Borrelia</taxon>
    </lineage>
</organism>